<accession>C1ERH2</accession>
<gene>
    <name evidence="1" type="primary">namA</name>
    <name type="ordered locus">BCA_2110</name>
</gene>
<comment type="function">
    <text evidence="1">Catalyzes the reduction of the double bond of an array of alpha,beta-unsaturated aldehydes and ketones. It also reduces the nitro group of nitroester and nitroaromatic compounds. It could have a role in detoxification processes.</text>
</comment>
<comment type="catalytic activity">
    <reaction evidence="1">
        <text>A + NADPH + H(+) = AH2 + NADP(+)</text>
        <dbReference type="Rhea" id="RHEA:13149"/>
        <dbReference type="ChEBI" id="CHEBI:13193"/>
        <dbReference type="ChEBI" id="CHEBI:15378"/>
        <dbReference type="ChEBI" id="CHEBI:17499"/>
        <dbReference type="ChEBI" id="CHEBI:57783"/>
        <dbReference type="ChEBI" id="CHEBI:58349"/>
        <dbReference type="EC" id="1.6.99.1"/>
    </reaction>
</comment>
<comment type="cofactor">
    <cofactor evidence="1">
        <name>FMN</name>
        <dbReference type="ChEBI" id="CHEBI:58210"/>
    </cofactor>
</comment>
<comment type="subunit">
    <text evidence="1">Homotetramer.</text>
</comment>
<comment type="similarity">
    <text evidence="1">Belongs to the NADH:flavin oxidoreductase/NADH oxidase family. NamA subfamily.</text>
</comment>
<protein>
    <recommendedName>
        <fullName evidence="1">NADPH dehydrogenase</fullName>
        <ecNumber evidence="1">1.6.99.1</ecNumber>
    </recommendedName>
</protein>
<proteinExistence type="inferred from homology"/>
<name>NAMA_BACC3</name>
<sequence length="345" mass="38463">MNSELFSPYTIKDVTLKNRIVMSPMCMYSSENEDGQVTNFHLIHYGTRAAGQVGLVMIEATAVLPEGRISNKDLGIWDDSLIEGLHKTTTFIHDNGAKAAIQLAHAGRKAELETDALAPSAVPFNETMKIPVEMSIQQIKNTILAFQQAAVRSKQAGFDVIEIHGAHGYLINEFLSPLSNKRTDEYGGSPEKRYRFLREIIDSINEVWNGPLFVRISANDYHPDGLTVQDYVQYTKWMKEQGVDLIDCSSGAVVPARIDVYPGYQVQYAKHIKEHANIATGAVGLITTGAQAEQILTNNEADLIFIGRELLRNPYFPRIAANELGFELEEPYQYERAPGKISTNK</sequence>
<evidence type="ECO:0000255" key="1">
    <source>
        <dbReference type="HAMAP-Rule" id="MF_01614"/>
    </source>
</evidence>
<feature type="chain" id="PRO_1000185860" description="NADPH dehydrogenase">
    <location>
        <begin position="1"/>
        <end position="345"/>
    </location>
</feature>
<feature type="binding site" evidence="1">
    <location>
        <begin position="23"/>
        <end position="26"/>
    </location>
    <ligand>
        <name>FMN</name>
        <dbReference type="ChEBI" id="CHEBI:58210"/>
    </ligand>
</feature>
<feature type="binding site" evidence="1">
    <location>
        <position position="28"/>
    </location>
    <ligand>
        <name>substrate</name>
    </ligand>
</feature>
<feature type="binding site" evidence="1">
    <location>
        <position position="60"/>
    </location>
    <ligand>
        <name>FMN</name>
        <dbReference type="ChEBI" id="CHEBI:58210"/>
    </ligand>
</feature>
<feature type="binding site" evidence="1">
    <location>
        <position position="102"/>
    </location>
    <ligand>
        <name>FMN</name>
        <dbReference type="ChEBI" id="CHEBI:58210"/>
    </ligand>
</feature>
<feature type="binding site" evidence="1">
    <location>
        <begin position="164"/>
        <end position="167"/>
    </location>
    <ligand>
        <name>substrate</name>
    </ligand>
</feature>
<feature type="binding site" evidence="1">
    <location>
        <position position="215"/>
    </location>
    <ligand>
        <name>FMN</name>
        <dbReference type="ChEBI" id="CHEBI:58210"/>
    </ligand>
</feature>
<feature type="binding site" evidence="1">
    <location>
        <begin position="307"/>
        <end position="308"/>
    </location>
    <ligand>
        <name>FMN</name>
        <dbReference type="ChEBI" id="CHEBI:58210"/>
    </ligand>
</feature>
<dbReference type="EC" id="1.6.99.1" evidence="1"/>
<dbReference type="EMBL" id="CP001407">
    <property type="protein sequence ID" value="ACO29188.1"/>
    <property type="molecule type" value="Genomic_DNA"/>
</dbReference>
<dbReference type="RefSeq" id="WP_001083637.1">
    <property type="nucleotide sequence ID" value="NZ_CP009318.1"/>
</dbReference>
<dbReference type="SMR" id="C1ERH2"/>
<dbReference type="KEGG" id="bcx:BCA_2110"/>
<dbReference type="PATRIC" id="fig|572264.18.peg.2056"/>
<dbReference type="Proteomes" id="UP000002210">
    <property type="component" value="Chromosome"/>
</dbReference>
<dbReference type="GO" id="GO:0010181">
    <property type="term" value="F:FMN binding"/>
    <property type="evidence" value="ECO:0007669"/>
    <property type="project" value="UniProtKB-UniRule"/>
</dbReference>
<dbReference type="GO" id="GO:0050661">
    <property type="term" value="F:NADP binding"/>
    <property type="evidence" value="ECO:0007669"/>
    <property type="project" value="UniProtKB-UniRule"/>
</dbReference>
<dbReference type="GO" id="GO:0003959">
    <property type="term" value="F:NADPH dehydrogenase activity"/>
    <property type="evidence" value="ECO:0007669"/>
    <property type="project" value="UniProtKB-UniRule"/>
</dbReference>
<dbReference type="GO" id="GO:0009636">
    <property type="term" value="P:response to toxic substance"/>
    <property type="evidence" value="ECO:0007669"/>
    <property type="project" value="UniProtKB-KW"/>
</dbReference>
<dbReference type="CDD" id="cd02932">
    <property type="entry name" value="OYE_YqiM_FMN"/>
    <property type="match status" value="1"/>
</dbReference>
<dbReference type="Gene3D" id="3.20.20.70">
    <property type="entry name" value="Aldolase class I"/>
    <property type="match status" value="1"/>
</dbReference>
<dbReference type="HAMAP" id="MF_01614">
    <property type="entry name" value="NamA"/>
    <property type="match status" value="1"/>
</dbReference>
<dbReference type="InterPro" id="IPR013785">
    <property type="entry name" value="Aldolase_TIM"/>
</dbReference>
<dbReference type="InterPro" id="IPR023663">
    <property type="entry name" value="NADPH_DH_bac"/>
</dbReference>
<dbReference type="InterPro" id="IPR001155">
    <property type="entry name" value="OxRdtase_FMN_N"/>
</dbReference>
<dbReference type="InterPro" id="IPR044152">
    <property type="entry name" value="YqjM-like"/>
</dbReference>
<dbReference type="NCBIfam" id="NF010047">
    <property type="entry name" value="PRK13523.1"/>
    <property type="match status" value="1"/>
</dbReference>
<dbReference type="PANTHER" id="PTHR43303">
    <property type="entry name" value="NADPH DEHYDROGENASE C23G7.10C-RELATED"/>
    <property type="match status" value="1"/>
</dbReference>
<dbReference type="PANTHER" id="PTHR43303:SF4">
    <property type="entry name" value="NADPH DEHYDROGENASE C23G7.10C-RELATED"/>
    <property type="match status" value="1"/>
</dbReference>
<dbReference type="Pfam" id="PF00724">
    <property type="entry name" value="Oxidored_FMN"/>
    <property type="match status" value="1"/>
</dbReference>
<dbReference type="SUPFAM" id="SSF51395">
    <property type="entry name" value="FMN-linked oxidoreductases"/>
    <property type="match status" value="1"/>
</dbReference>
<reference key="1">
    <citation type="submission" date="2009-02" db="EMBL/GenBank/DDBJ databases">
        <title>Genome sequence of Bacillus cereus 03BB102.</title>
        <authorList>
            <person name="Dodson R.J."/>
            <person name="Jackson P."/>
            <person name="Munk A.C."/>
            <person name="Brettin T."/>
            <person name="Bruce D."/>
            <person name="Detter C."/>
            <person name="Tapia R."/>
            <person name="Han C."/>
            <person name="Sutton G."/>
            <person name="Sims D."/>
        </authorList>
    </citation>
    <scope>NUCLEOTIDE SEQUENCE [LARGE SCALE GENOMIC DNA]</scope>
    <source>
        <strain>03BB102</strain>
    </source>
</reference>
<organism>
    <name type="scientific">Bacillus cereus (strain 03BB102)</name>
    <dbReference type="NCBI Taxonomy" id="572264"/>
    <lineage>
        <taxon>Bacteria</taxon>
        <taxon>Bacillati</taxon>
        <taxon>Bacillota</taxon>
        <taxon>Bacilli</taxon>
        <taxon>Bacillales</taxon>
        <taxon>Bacillaceae</taxon>
        <taxon>Bacillus</taxon>
        <taxon>Bacillus cereus group</taxon>
    </lineage>
</organism>
<keyword id="KW-0216">Detoxification</keyword>
<keyword id="KW-0285">Flavoprotein</keyword>
<keyword id="KW-0288">FMN</keyword>
<keyword id="KW-0521">NADP</keyword>
<keyword id="KW-0560">Oxidoreductase</keyword>